<organism>
    <name type="scientific">Staphylococcus aureus (strain JH9)</name>
    <dbReference type="NCBI Taxonomy" id="359786"/>
    <lineage>
        <taxon>Bacteria</taxon>
        <taxon>Bacillati</taxon>
        <taxon>Bacillota</taxon>
        <taxon>Bacilli</taxon>
        <taxon>Bacillales</taxon>
        <taxon>Staphylococcaceae</taxon>
        <taxon>Staphylococcus</taxon>
    </lineage>
</organism>
<reference key="1">
    <citation type="submission" date="2007-05" db="EMBL/GenBank/DDBJ databases">
        <title>Complete sequence of chromosome of Staphylococcus aureus subsp. aureus JH9.</title>
        <authorList>
            <consortium name="US DOE Joint Genome Institute"/>
            <person name="Copeland A."/>
            <person name="Lucas S."/>
            <person name="Lapidus A."/>
            <person name="Barry K."/>
            <person name="Detter J.C."/>
            <person name="Glavina del Rio T."/>
            <person name="Hammon N."/>
            <person name="Israni S."/>
            <person name="Pitluck S."/>
            <person name="Chain P."/>
            <person name="Malfatti S."/>
            <person name="Shin M."/>
            <person name="Vergez L."/>
            <person name="Schmutz J."/>
            <person name="Larimer F."/>
            <person name="Land M."/>
            <person name="Hauser L."/>
            <person name="Kyrpides N."/>
            <person name="Kim E."/>
            <person name="Tomasz A."/>
            <person name="Richardson P."/>
        </authorList>
    </citation>
    <scope>NUCLEOTIDE SEQUENCE [LARGE SCALE GENOMIC DNA]</scope>
    <source>
        <strain>JH9</strain>
    </source>
</reference>
<evidence type="ECO:0000255" key="1">
    <source>
        <dbReference type="HAMAP-Rule" id="MF_00019"/>
    </source>
</evidence>
<proteinExistence type="inferred from homology"/>
<keyword id="KW-0963">Cytoplasm</keyword>
<keyword id="KW-0444">Lipid biosynthesis</keyword>
<keyword id="KW-0443">Lipid metabolism</keyword>
<keyword id="KW-0594">Phospholipid biosynthesis</keyword>
<keyword id="KW-1208">Phospholipid metabolism</keyword>
<keyword id="KW-0808">Transferase</keyword>
<feature type="chain" id="PRO_1000074176" description="Phosphate acyltransferase">
    <location>
        <begin position="1"/>
        <end position="328"/>
    </location>
</feature>
<accession>A5ISB4</accession>
<name>PLSX_STAA9</name>
<protein>
    <recommendedName>
        <fullName evidence="1">Phosphate acyltransferase</fullName>
        <ecNumber evidence="1">2.3.1.274</ecNumber>
    </recommendedName>
    <alternativeName>
        <fullName evidence="1">Acyl-ACP phosphotransacylase</fullName>
    </alternativeName>
    <alternativeName>
        <fullName evidence="1">Acyl-[acyl-carrier-protein]--phosphate acyltransferase</fullName>
    </alternativeName>
    <alternativeName>
        <fullName evidence="1">Phosphate-acyl-ACP acyltransferase</fullName>
    </alternativeName>
</protein>
<dbReference type="EC" id="2.3.1.274" evidence="1"/>
<dbReference type="EMBL" id="CP000703">
    <property type="protein sequence ID" value="ABQ49087.1"/>
    <property type="molecule type" value="Genomic_DNA"/>
</dbReference>
<dbReference type="RefSeq" id="WP_000239753.1">
    <property type="nucleotide sequence ID" value="NC_009487.1"/>
</dbReference>
<dbReference type="SMR" id="A5ISB4"/>
<dbReference type="KEGG" id="saj:SaurJH9_1288"/>
<dbReference type="HOGENOM" id="CLU_039379_1_1_9"/>
<dbReference type="UniPathway" id="UPA00085"/>
<dbReference type="GO" id="GO:0005737">
    <property type="term" value="C:cytoplasm"/>
    <property type="evidence" value="ECO:0007669"/>
    <property type="project" value="UniProtKB-SubCell"/>
</dbReference>
<dbReference type="GO" id="GO:0043811">
    <property type="term" value="F:phosphate:acyl-[acyl carrier protein] acyltransferase activity"/>
    <property type="evidence" value="ECO:0007669"/>
    <property type="project" value="UniProtKB-UniRule"/>
</dbReference>
<dbReference type="GO" id="GO:0006633">
    <property type="term" value="P:fatty acid biosynthetic process"/>
    <property type="evidence" value="ECO:0007669"/>
    <property type="project" value="UniProtKB-UniRule"/>
</dbReference>
<dbReference type="GO" id="GO:0008654">
    <property type="term" value="P:phospholipid biosynthetic process"/>
    <property type="evidence" value="ECO:0007669"/>
    <property type="project" value="UniProtKB-KW"/>
</dbReference>
<dbReference type="Gene3D" id="3.40.718.10">
    <property type="entry name" value="Isopropylmalate Dehydrogenase"/>
    <property type="match status" value="1"/>
</dbReference>
<dbReference type="HAMAP" id="MF_00019">
    <property type="entry name" value="PlsX"/>
    <property type="match status" value="1"/>
</dbReference>
<dbReference type="InterPro" id="IPR003664">
    <property type="entry name" value="FA_synthesis"/>
</dbReference>
<dbReference type="InterPro" id="IPR012281">
    <property type="entry name" value="Phospholipid_synth_PlsX-like"/>
</dbReference>
<dbReference type="NCBIfam" id="TIGR00182">
    <property type="entry name" value="plsX"/>
    <property type="match status" value="1"/>
</dbReference>
<dbReference type="PANTHER" id="PTHR30100">
    <property type="entry name" value="FATTY ACID/PHOSPHOLIPID SYNTHESIS PROTEIN PLSX"/>
    <property type="match status" value="1"/>
</dbReference>
<dbReference type="PANTHER" id="PTHR30100:SF1">
    <property type="entry name" value="PHOSPHATE ACYLTRANSFERASE"/>
    <property type="match status" value="1"/>
</dbReference>
<dbReference type="Pfam" id="PF02504">
    <property type="entry name" value="FA_synthesis"/>
    <property type="match status" value="1"/>
</dbReference>
<dbReference type="PIRSF" id="PIRSF002465">
    <property type="entry name" value="Phsphlp_syn_PlsX"/>
    <property type="match status" value="1"/>
</dbReference>
<dbReference type="SUPFAM" id="SSF53659">
    <property type="entry name" value="Isocitrate/Isopropylmalate dehydrogenase-like"/>
    <property type="match status" value="1"/>
</dbReference>
<sequence>MVKLAIDMMGGDNAPDIVLEAVQKAVEDFKNLEIMLFGDEKKYNLNHERIEFRHCSEKIEMEDEPVRAIKRKKDSSMVKMAEAVKSGEADGCVSAGNTGALMSVGLFIVGRIKGVARPALVVTLPTIDGKGFVFLDVGANADAKPEHLLQYAQLGDIYAQKIRGIDNPKISLLNIGTEPAKGNSLTKKSFELLNQDHSLNFVGNIEAKTLMDGDTDVVVTDGYTGNMVLKNLEGTAKSIGKMLKDTIMSSTKNKLAGAILKKDLAEFAKKMDYSEYGGSVLLGLEGTVVKAHGSSNAKAFYSAIRQAKIAGEQNIVQTMKETVGESNE</sequence>
<gene>
    <name evidence="1" type="primary">plsX</name>
    <name type="ordered locus">SaurJH9_1288</name>
</gene>
<comment type="function">
    <text evidence="1">Catalyzes the reversible formation of acyl-phosphate (acyl-PO(4)) from acyl-[acyl-carrier-protein] (acyl-ACP). This enzyme utilizes acyl-ACP as fatty acyl donor, but not acyl-CoA.</text>
</comment>
<comment type="catalytic activity">
    <reaction evidence="1">
        <text>a fatty acyl-[ACP] + phosphate = an acyl phosphate + holo-[ACP]</text>
        <dbReference type="Rhea" id="RHEA:42292"/>
        <dbReference type="Rhea" id="RHEA-COMP:9685"/>
        <dbReference type="Rhea" id="RHEA-COMP:14125"/>
        <dbReference type="ChEBI" id="CHEBI:43474"/>
        <dbReference type="ChEBI" id="CHEBI:59918"/>
        <dbReference type="ChEBI" id="CHEBI:64479"/>
        <dbReference type="ChEBI" id="CHEBI:138651"/>
        <dbReference type="EC" id="2.3.1.274"/>
    </reaction>
</comment>
<comment type="pathway">
    <text evidence="1">Lipid metabolism; phospholipid metabolism.</text>
</comment>
<comment type="subunit">
    <text evidence="1">Homodimer. Probably interacts with PlsY.</text>
</comment>
<comment type="subcellular location">
    <subcellularLocation>
        <location evidence="1">Cytoplasm</location>
    </subcellularLocation>
    <text evidence="1">Associated with the membrane possibly through PlsY.</text>
</comment>
<comment type="similarity">
    <text evidence="1">Belongs to the PlsX family.</text>
</comment>